<feature type="chain" id="PRO_0000326759" description="Acylphosphatase">
    <location>
        <begin position="1"/>
        <end position="89"/>
    </location>
</feature>
<feature type="domain" description="Acylphosphatase-like" evidence="1">
    <location>
        <begin position="4"/>
        <end position="89"/>
    </location>
</feature>
<feature type="active site" evidence="1">
    <location>
        <position position="19"/>
    </location>
</feature>
<feature type="active site" evidence="1">
    <location>
        <position position="37"/>
    </location>
</feature>
<evidence type="ECO:0000255" key="1">
    <source>
        <dbReference type="PROSITE-ProRule" id="PRU00520"/>
    </source>
</evidence>
<evidence type="ECO:0000305" key="2"/>
<dbReference type="EC" id="3.6.1.7"/>
<dbReference type="EMBL" id="CP000127">
    <property type="protein sequence ID" value="ABA57400.1"/>
    <property type="molecule type" value="Genomic_DNA"/>
</dbReference>
<dbReference type="RefSeq" id="WP_011330504.1">
    <property type="nucleotide sequence ID" value="NC_007484.1"/>
</dbReference>
<dbReference type="SMR" id="Q3JCP6"/>
<dbReference type="FunCoup" id="Q3JCP6">
    <property type="interactions" value="280"/>
</dbReference>
<dbReference type="STRING" id="323261.Noc_0888"/>
<dbReference type="KEGG" id="noc:Noc_0888"/>
<dbReference type="eggNOG" id="COG1254">
    <property type="taxonomic scope" value="Bacteria"/>
</dbReference>
<dbReference type="HOGENOM" id="CLU_141932_1_3_6"/>
<dbReference type="InParanoid" id="Q3JCP6"/>
<dbReference type="Proteomes" id="UP000006838">
    <property type="component" value="Chromosome"/>
</dbReference>
<dbReference type="GO" id="GO:0003998">
    <property type="term" value="F:acylphosphatase activity"/>
    <property type="evidence" value="ECO:0007669"/>
    <property type="project" value="UniProtKB-EC"/>
</dbReference>
<dbReference type="Gene3D" id="3.30.70.100">
    <property type="match status" value="1"/>
</dbReference>
<dbReference type="InterPro" id="IPR020456">
    <property type="entry name" value="Acylphosphatase"/>
</dbReference>
<dbReference type="InterPro" id="IPR001792">
    <property type="entry name" value="Acylphosphatase-like_dom"/>
</dbReference>
<dbReference type="InterPro" id="IPR036046">
    <property type="entry name" value="Acylphosphatase-like_dom_sf"/>
</dbReference>
<dbReference type="InterPro" id="IPR017968">
    <property type="entry name" value="Acylphosphatase_CS"/>
</dbReference>
<dbReference type="NCBIfam" id="NF011022">
    <property type="entry name" value="PRK14451.1"/>
    <property type="match status" value="1"/>
</dbReference>
<dbReference type="PANTHER" id="PTHR47268">
    <property type="entry name" value="ACYLPHOSPHATASE"/>
    <property type="match status" value="1"/>
</dbReference>
<dbReference type="PANTHER" id="PTHR47268:SF4">
    <property type="entry name" value="ACYLPHOSPHATASE"/>
    <property type="match status" value="1"/>
</dbReference>
<dbReference type="Pfam" id="PF00708">
    <property type="entry name" value="Acylphosphatase"/>
    <property type="match status" value="1"/>
</dbReference>
<dbReference type="PRINTS" id="PR00112">
    <property type="entry name" value="ACYLPHPHTASE"/>
</dbReference>
<dbReference type="SUPFAM" id="SSF54975">
    <property type="entry name" value="Acylphosphatase/BLUF domain-like"/>
    <property type="match status" value="1"/>
</dbReference>
<dbReference type="PROSITE" id="PS00150">
    <property type="entry name" value="ACYLPHOSPHATASE_1"/>
    <property type="match status" value="1"/>
</dbReference>
<dbReference type="PROSITE" id="PS00151">
    <property type="entry name" value="ACYLPHOSPHATASE_2"/>
    <property type="match status" value="1"/>
</dbReference>
<dbReference type="PROSITE" id="PS51160">
    <property type="entry name" value="ACYLPHOSPHATASE_3"/>
    <property type="match status" value="1"/>
</dbReference>
<organism>
    <name type="scientific">Nitrosococcus oceani (strain ATCC 19707 / BCRC 17464 / JCM 30415 / NCIMB 11848 / C-107)</name>
    <dbReference type="NCBI Taxonomy" id="323261"/>
    <lineage>
        <taxon>Bacteria</taxon>
        <taxon>Pseudomonadati</taxon>
        <taxon>Pseudomonadota</taxon>
        <taxon>Gammaproteobacteria</taxon>
        <taxon>Chromatiales</taxon>
        <taxon>Chromatiaceae</taxon>
        <taxon>Nitrosococcus</taxon>
    </lineage>
</organism>
<gene>
    <name type="primary">acyP</name>
    <name type="ordered locus">Noc_0888</name>
</gene>
<accession>Q3JCP6</accession>
<name>ACYP_NITOC</name>
<proteinExistence type="inferred from homology"/>
<protein>
    <recommendedName>
        <fullName>Acylphosphatase</fullName>
        <ecNumber>3.6.1.7</ecNumber>
    </recommendedName>
    <alternativeName>
        <fullName>Acylphosphate phosphohydrolase</fullName>
    </alternativeName>
</protein>
<keyword id="KW-0378">Hydrolase</keyword>
<keyword id="KW-1185">Reference proteome</keyword>
<reference key="1">
    <citation type="journal article" date="2006" name="Appl. Environ. Microbiol.">
        <title>Complete genome sequence of the marine, chemolithoautotrophic, ammonia-oxidizing bacterium Nitrosococcus oceani ATCC 19707.</title>
        <authorList>
            <person name="Klotz M.G."/>
            <person name="Arp D.J."/>
            <person name="Chain P.S.G."/>
            <person name="El-Sheikh A.F."/>
            <person name="Hauser L.J."/>
            <person name="Hommes N.G."/>
            <person name="Larimer F.W."/>
            <person name="Malfatti S.A."/>
            <person name="Norton J.M."/>
            <person name="Poret-Peterson A.T."/>
            <person name="Vergez L.M."/>
            <person name="Ward B.B."/>
        </authorList>
    </citation>
    <scope>NUCLEOTIDE SEQUENCE [LARGE SCALE GENOMIC DNA]</scope>
    <source>
        <strain>ATCC 19707 / BCRC 17464 / JCM 30415 / NCIMB 11848 / C-107</strain>
    </source>
</reference>
<sequence>MVTCVRCLIAGRVQGVWFRASTKEKAMELGVRGWVRNLPDGRVEALLQGEAEAVEALKKWLWRGPTLAQVVDVQSEMVEIPEIQMFEVR</sequence>
<comment type="catalytic activity">
    <reaction>
        <text>an acyl phosphate + H2O = a carboxylate + phosphate + H(+)</text>
        <dbReference type="Rhea" id="RHEA:14965"/>
        <dbReference type="ChEBI" id="CHEBI:15377"/>
        <dbReference type="ChEBI" id="CHEBI:15378"/>
        <dbReference type="ChEBI" id="CHEBI:29067"/>
        <dbReference type="ChEBI" id="CHEBI:43474"/>
        <dbReference type="ChEBI" id="CHEBI:59918"/>
        <dbReference type="EC" id="3.6.1.7"/>
    </reaction>
</comment>
<comment type="similarity">
    <text evidence="2">Belongs to the acylphosphatase family.</text>
</comment>